<comment type="function">
    <text evidence="1">Specifically catalyzes the N1-methylation of pseudouridine at position 54 (Psi54) in tRNAs.</text>
</comment>
<comment type="catalytic activity">
    <reaction evidence="1">
        <text>pseudouridine(54) in tRNA + S-adenosyl-L-methionine = N(1)-methylpseudouridine(54) in tRNA + S-adenosyl-L-homocysteine + H(+)</text>
        <dbReference type="Rhea" id="RHEA:55292"/>
        <dbReference type="Rhea" id="RHEA-COMP:14140"/>
        <dbReference type="Rhea" id="RHEA-COMP:14141"/>
        <dbReference type="ChEBI" id="CHEBI:15378"/>
        <dbReference type="ChEBI" id="CHEBI:57856"/>
        <dbReference type="ChEBI" id="CHEBI:59789"/>
        <dbReference type="ChEBI" id="CHEBI:65314"/>
        <dbReference type="ChEBI" id="CHEBI:74890"/>
        <dbReference type="EC" id="2.1.1.257"/>
    </reaction>
</comment>
<comment type="subunit">
    <text evidence="1">Homodimer.</text>
</comment>
<comment type="subcellular location">
    <subcellularLocation>
        <location evidence="1">Cytoplasm</location>
    </subcellularLocation>
</comment>
<comment type="similarity">
    <text evidence="1">Belongs to the methyltransferase superfamily. TrmY family.</text>
</comment>
<dbReference type="EC" id="2.1.1.257" evidence="1"/>
<dbReference type="EMBL" id="CP000254">
    <property type="protein sequence ID" value="ABD42711.1"/>
    <property type="molecule type" value="Genomic_DNA"/>
</dbReference>
<dbReference type="RefSeq" id="WP_011449962.1">
    <property type="nucleotide sequence ID" value="NC_007796.1"/>
</dbReference>
<dbReference type="SMR" id="Q2FS92"/>
<dbReference type="STRING" id="323259.Mhun_3024"/>
<dbReference type="EnsemblBacteria" id="ABD42711">
    <property type="protein sequence ID" value="ABD42711"/>
    <property type="gene ID" value="Mhun_3024"/>
</dbReference>
<dbReference type="GeneID" id="3922925"/>
<dbReference type="KEGG" id="mhu:Mhun_3024"/>
<dbReference type="eggNOG" id="arCOG01239">
    <property type="taxonomic scope" value="Archaea"/>
</dbReference>
<dbReference type="HOGENOM" id="CLU_107018_0_0_2"/>
<dbReference type="InParanoid" id="Q2FS92"/>
<dbReference type="OrthoDB" id="27492at2157"/>
<dbReference type="Proteomes" id="UP000001941">
    <property type="component" value="Chromosome"/>
</dbReference>
<dbReference type="GO" id="GO:0005737">
    <property type="term" value="C:cytoplasm"/>
    <property type="evidence" value="ECO:0007669"/>
    <property type="project" value="UniProtKB-SubCell"/>
</dbReference>
<dbReference type="GO" id="GO:0008757">
    <property type="term" value="F:S-adenosylmethionine-dependent methyltransferase activity"/>
    <property type="evidence" value="ECO:0007669"/>
    <property type="project" value="UniProtKB-UniRule"/>
</dbReference>
<dbReference type="GO" id="GO:0008175">
    <property type="term" value="F:tRNA methyltransferase activity"/>
    <property type="evidence" value="ECO:0007669"/>
    <property type="project" value="UniProtKB-UniRule"/>
</dbReference>
<dbReference type="GO" id="GO:0030488">
    <property type="term" value="P:tRNA methylation"/>
    <property type="evidence" value="ECO:0007669"/>
    <property type="project" value="UniProtKB-UniRule"/>
</dbReference>
<dbReference type="CDD" id="cd18087">
    <property type="entry name" value="TrmY-like"/>
    <property type="match status" value="1"/>
</dbReference>
<dbReference type="Gene3D" id="3.40.1280.10">
    <property type="match status" value="1"/>
</dbReference>
<dbReference type="HAMAP" id="MF_00587">
    <property type="entry name" value="tRNA_methyltr_TrmY"/>
    <property type="match status" value="1"/>
</dbReference>
<dbReference type="InterPro" id="IPR029028">
    <property type="entry name" value="Alpha/beta_knot_MTases"/>
</dbReference>
<dbReference type="InterPro" id="IPR007158">
    <property type="entry name" value="TrmY"/>
</dbReference>
<dbReference type="InterPro" id="IPR029026">
    <property type="entry name" value="tRNA_m1G_MTases_N"/>
</dbReference>
<dbReference type="NCBIfam" id="NF002560">
    <property type="entry name" value="PRK02135.1"/>
    <property type="match status" value="1"/>
</dbReference>
<dbReference type="PANTHER" id="PTHR40703">
    <property type="entry name" value="TRNA (PSEUDOURIDINE(54)-N(1))-METHYLTRANSFERASE"/>
    <property type="match status" value="1"/>
</dbReference>
<dbReference type="PANTHER" id="PTHR40703:SF1">
    <property type="entry name" value="TRNA (PSEUDOURIDINE(54)-N(1))-METHYLTRANSFERASE"/>
    <property type="match status" value="1"/>
</dbReference>
<dbReference type="Pfam" id="PF04013">
    <property type="entry name" value="Methyltrn_RNA_2"/>
    <property type="match status" value="1"/>
</dbReference>
<dbReference type="SUPFAM" id="SSF75217">
    <property type="entry name" value="alpha/beta knot"/>
    <property type="match status" value="1"/>
</dbReference>
<proteinExistence type="inferred from homology"/>
<accession>Q2FS92</accession>
<organism>
    <name type="scientific">Methanospirillum hungatei JF-1 (strain ATCC 27890 / DSM 864 / NBRC 100397 / JF-1)</name>
    <dbReference type="NCBI Taxonomy" id="323259"/>
    <lineage>
        <taxon>Archaea</taxon>
        <taxon>Methanobacteriati</taxon>
        <taxon>Methanobacteriota</taxon>
        <taxon>Stenosarchaea group</taxon>
        <taxon>Methanomicrobia</taxon>
        <taxon>Methanomicrobiales</taxon>
        <taxon>Methanospirillaceae</taxon>
        <taxon>Methanospirillum</taxon>
    </lineage>
</organism>
<evidence type="ECO:0000255" key="1">
    <source>
        <dbReference type="HAMAP-Rule" id="MF_00587"/>
    </source>
</evidence>
<feature type="chain" id="PRO_1000025466" description="tRNA (pseudouridine(54)-N(1))-methyltransferase">
    <location>
        <begin position="1"/>
        <end position="194"/>
    </location>
</feature>
<feature type="binding site" evidence="1">
    <location>
        <position position="125"/>
    </location>
    <ligand>
        <name>S-adenosyl-L-methionine</name>
        <dbReference type="ChEBI" id="CHEBI:59789"/>
    </ligand>
</feature>
<name>TRMY_METHJ</name>
<keyword id="KW-0963">Cytoplasm</keyword>
<keyword id="KW-0489">Methyltransferase</keyword>
<keyword id="KW-1185">Reference proteome</keyword>
<keyword id="KW-0949">S-adenosyl-L-methionine</keyword>
<keyword id="KW-0808">Transferase</keyword>
<keyword id="KW-0819">tRNA processing</keyword>
<sequence length="194" mass="21236">MTSFTVIGHTACTDASFPLDDLPGKGGRMDLLCRAVASSLFLSHGIREDTTCDIMLLGQPHPGRIIRFDGSALRSLSPDERNIASSIKRALAIPAGKTFREAGPGLLTRKGTLADQLSEKHYAVLDESGVDIRKVATEELPDAFLLSDNRNFSDDEMELIRDIPKYSLGPAIVHADHAIVLILNEIDRRRSGWI</sequence>
<protein>
    <recommendedName>
        <fullName evidence="1">tRNA (pseudouridine(54)-N(1))-methyltransferase</fullName>
        <ecNumber evidence="1">2.1.1.257</ecNumber>
    </recommendedName>
</protein>
<reference key="1">
    <citation type="journal article" date="2016" name="Stand. Genomic Sci.">
        <title>Complete genome sequence of Methanospirillum hungatei type strain JF1.</title>
        <authorList>
            <person name="Gunsalus R.P."/>
            <person name="Cook L.E."/>
            <person name="Crable B."/>
            <person name="Rohlin L."/>
            <person name="McDonald E."/>
            <person name="Mouttaki H."/>
            <person name="Sieber J.R."/>
            <person name="Poweleit N."/>
            <person name="Zhou H."/>
            <person name="Lapidus A.L."/>
            <person name="Daligault H.E."/>
            <person name="Land M."/>
            <person name="Gilna P."/>
            <person name="Ivanova N."/>
            <person name="Kyrpides N."/>
            <person name="Culley D.E."/>
            <person name="McInerney M.J."/>
        </authorList>
    </citation>
    <scope>NUCLEOTIDE SEQUENCE [LARGE SCALE GENOMIC DNA]</scope>
    <source>
        <strain>ATCC 27890 / DSM 864 / NBRC 100397 / JF-1</strain>
    </source>
</reference>
<gene>
    <name evidence="1" type="primary">trmY</name>
    <name type="ordered locus">Mhun_3024</name>
</gene>